<proteinExistence type="inferred from homology"/>
<evidence type="ECO:0000255" key="1">
    <source>
        <dbReference type="HAMAP-Rule" id="MF_01874"/>
    </source>
</evidence>
<reference key="1">
    <citation type="submission" date="2008-06" db="EMBL/GenBank/DDBJ databases">
        <title>Lactobacillus casei BL23 complete genome sequence.</title>
        <authorList>
            <person name="Maze A."/>
            <person name="Boel G."/>
            <person name="Bourand A."/>
            <person name="Loux V."/>
            <person name="Gibrat J.F."/>
            <person name="Zuniga M."/>
            <person name="Hartke A."/>
            <person name="Deutscher J."/>
        </authorList>
    </citation>
    <scope>NUCLEOTIDE SEQUENCE [LARGE SCALE GENOMIC DNA]</scope>
    <source>
        <strain>BL23</strain>
    </source>
</reference>
<accession>B3WE66</accession>
<feature type="chain" id="PRO_0000388893" description="UPF0756 membrane protein LCABL_15860">
    <location>
        <begin position="1"/>
        <end position="153"/>
    </location>
</feature>
<feature type="transmembrane region" description="Helical" evidence="1">
    <location>
        <begin position="4"/>
        <end position="24"/>
    </location>
</feature>
<feature type="transmembrane region" description="Helical" evidence="1">
    <location>
        <begin position="52"/>
        <end position="72"/>
    </location>
</feature>
<feature type="transmembrane region" description="Helical" evidence="1">
    <location>
        <begin position="85"/>
        <end position="105"/>
    </location>
</feature>
<feature type="transmembrane region" description="Helical" evidence="1">
    <location>
        <begin position="115"/>
        <end position="135"/>
    </location>
</feature>
<comment type="subcellular location">
    <subcellularLocation>
        <location evidence="1">Cell membrane</location>
        <topology evidence="1">Multi-pass membrane protein</topology>
    </subcellularLocation>
</comment>
<comment type="similarity">
    <text evidence="1">Belongs to the UPF0756 family.</text>
</comment>
<sequence length="153" mass="15868">MESWLFLLGILAIAIVGKNKSLIIGVSAVMVFKLIPQTQNFLKLLQTQGINWGVTVISAAIMVPIATGEIGFKELLNVIKSPAGWIAIGCGVLVAVLSAKGVGLLAMSPEMTVALVFGTIIGVVFLKGIAAGPVIASGLTYVILTVFNLVPGH</sequence>
<gene>
    <name type="ordered locus">LCABL_15860</name>
</gene>
<protein>
    <recommendedName>
        <fullName evidence="1">UPF0756 membrane protein LCABL_15860</fullName>
    </recommendedName>
</protein>
<keyword id="KW-1003">Cell membrane</keyword>
<keyword id="KW-0472">Membrane</keyword>
<keyword id="KW-0812">Transmembrane</keyword>
<keyword id="KW-1133">Transmembrane helix</keyword>
<name>Y1586_LACCB</name>
<organism>
    <name type="scientific">Lacticaseibacillus casei (strain BL23)</name>
    <name type="common">Lactobacillus casei</name>
    <dbReference type="NCBI Taxonomy" id="543734"/>
    <lineage>
        <taxon>Bacteria</taxon>
        <taxon>Bacillati</taxon>
        <taxon>Bacillota</taxon>
        <taxon>Bacilli</taxon>
        <taxon>Lactobacillales</taxon>
        <taxon>Lactobacillaceae</taxon>
        <taxon>Lacticaseibacillus</taxon>
    </lineage>
</organism>
<dbReference type="EMBL" id="FM177140">
    <property type="protein sequence ID" value="CAQ66667.1"/>
    <property type="molecule type" value="Genomic_DNA"/>
</dbReference>
<dbReference type="KEGG" id="lcb:LCABL_15860"/>
<dbReference type="HOGENOM" id="CLU_125889_1_0_9"/>
<dbReference type="GO" id="GO:0005886">
    <property type="term" value="C:plasma membrane"/>
    <property type="evidence" value="ECO:0007669"/>
    <property type="project" value="UniProtKB-SubCell"/>
</dbReference>
<dbReference type="HAMAP" id="MF_01874">
    <property type="entry name" value="UPF0756"/>
    <property type="match status" value="1"/>
</dbReference>
<dbReference type="InterPro" id="IPR007382">
    <property type="entry name" value="UPF0756_TM"/>
</dbReference>
<dbReference type="PANTHER" id="PTHR38452">
    <property type="entry name" value="UPF0756 MEMBRANE PROTEIN YEAL"/>
    <property type="match status" value="1"/>
</dbReference>
<dbReference type="PANTHER" id="PTHR38452:SF1">
    <property type="entry name" value="UPF0756 MEMBRANE PROTEIN YEAL"/>
    <property type="match status" value="1"/>
</dbReference>
<dbReference type="Pfam" id="PF04284">
    <property type="entry name" value="DUF441"/>
    <property type="match status" value="1"/>
</dbReference>